<comment type="function">
    <text evidence="2 3">Plays a role in viral genome replication by driving entry of quiescent cells into the cell cycle. Stimulation of progression from G1 to S phase allows the virus to efficiently use the cellular DNA replicating machinery to achieve viral genome replication. E7 protein has both transforming and trans-activating activities. Induces the disassembly of the E2F1 transcription factor from RB1, with subsequent transcriptional activation of E2F1-regulated S-phase genes. Interferes with host histone deacetylation mediated by HDAC1 and HDAC2, leading to transcription activation. Also plays a role in the inhibition of both antiviral and antiproliferative functions of host interferon alpha. Interaction with host TMEM173/STING impairs the ability of TMEM173/STING to sense cytosolic DNA and promote the production of type I interferon (IFN-alpha and IFN-beta) (PubMed:26405230).</text>
</comment>
<comment type="subunit">
    <text evidence="2 3">Homodimer. Homooligomer. Interacts with host RB1; this interaction induces dissociation of RB1-E2F1 complex thereby disrupting RB1 activity. Interacts with host EP300; this interaction represses EP300 transcriptional activity. Interacts with protein E2; this interaction inhibits E7 oncogenic activity. Interacts with host TMEM173/STING; this interaction impairs the ability of TMEM173/STING to sense cytosolic DNA and promote the production of type I interferon (IFN-alpha and IFN-beta) (PubMed:26405230).</text>
</comment>
<comment type="interaction">
    <interactant intactId="EBI-1776887">
        <id>P06788</id>
    </interactant>
    <interactant intactId="EBI-447544">
        <id>P01106</id>
        <label>MYC</label>
    </interactant>
    <organismsDiffer>true</organismsDiffer>
    <experiments>5</experiments>
</comment>
<comment type="interaction">
    <interactant intactId="EBI-1776887">
        <id>P06788</id>
    </interactant>
    <interactant intactId="EBI-491274">
        <id>P06400</id>
        <label>RB1</label>
    </interactant>
    <organismsDiffer>true</organismsDiffer>
    <experiments>4</experiments>
</comment>
<comment type="subcellular location">
    <subcellularLocation>
        <location evidence="2">Host cytoplasm</location>
    </subcellularLocation>
    <subcellularLocation>
        <location evidence="2">Host nucleus</location>
    </subcellularLocation>
    <text evidence="2">Predominantly found in the host nucleus.</text>
</comment>
<comment type="domain">
    <text evidence="2">The E7 terminal domain is an intrinsically disordered domain, whose flexibility and conformational transitions confer target adaptability to the oncoprotein. It allows adaptation to a variety of protein targets and exposes the PEST degradation sequence that regulates its turnover in the cell.</text>
</comment>
<comment type="PTM">
    <text evidence="2">Highly phosphorylated.</text>
</comment>
<comment type="similarity">
    <text evidence="2">Belongs to the papillomaviridae E7 protein family.</text>
</comment>
<proteinExistence type="evidence at protein level"/>
<dbReference type="EMBL" id="X05015">
    <property type="protein sequence ID" value="CAA28665.1"/>
    <property type="molecule type" value="Genomic_DNA"/>
</dbReference>
<dbReference type="EMBL" id="M20324">
    <property type="protein sequence ID" value="AAA99513.1"/>
    <property type="molecule type" value="mRNA"/>
</dbReference>
<dbReference type="EMBL" id="M20325">
    <property type="protein sequence ID" value="AAA99515.1"/>
    <property type="molecule type" value="mRNA"/>
</dbReference>
<dbReference type="EMBL" id="M26798">
    <property type="protein sequence ID" value="AAA46947.1"/>
    <property type="molecule type" value="Genomic_DNA"/>
</dbReference>
<dbReference type="EMBL" id="X04773">
    <property type="protein sequence ID" value="CAA28467.1"/>
    <property type="molecule type" value="Genomic_DNA"/>
</dbReference>
<dbReference type="EMBL" id="A06324">
    <property type="protein sequence ID" value="CAA00540.1"/>
    <property type="molecule type" value="Unassigned_DNA"/>
</dbReference>
<dbReference type="EMBL" id="A06328">
    <property type="protein sequence ID" value="CAA00543.1"/>
    <property type="molecule type" value="Unassigned_RNA"/>
</dbReference>
<dbReference type="PIR" id="B26165">
    <property type="entry name" value="W7WL18"/>
</dbReference>
<dbReference type="PDB" id="6IWD">
    <property type="method" value="X-ray"/>
    <property type="resolution" value="1.80 A"/>
    <property type="chains" value="B=54-105"/>
</dbReference>
<dbReference type="PDBsum" id="6IWD"/>
<dbReference type="SMR" id="P06788"/>
<dbReference type="DIP" id="DIP-45143N"/>
<dbReference type="IntAct" id="P06788">
    <property type="interactions" value="55"/>
</dbReference>
<dbReference type="MINT" id="P06788"/>
<dbReference type="ChEMBL" id="CHEMBL4802005"/>
<dbReference type="KEGG" id="vg:1489089"/>
<dbReference type="Proteomes" id="UP000009109">
    <property type="component" value="Genome"/>
</dbReference>
<dbReference type="GO" id="GO:0030430">
    <property type="term" value="C:host cell cytoplasm"/>
    <property type="evidence" value="ECO:0007669"/>
    <property type="project" value="UniProtKB-SubCell"/>
</dbReference>
<dbReference type="GO" id="GO:0042025">
    <property type="term" value="C:host cell nucleus"/>
    <property type="evidence" value="ECO:0007669"/>
    <property type="project" value="UniProtKB-SubCell"/>
</dbReference>
<dbReference type="GO" id="GO:0003677">
    <property type="term" value="F:DNA binding"/>
    <property type="evidence" value="ECO:0007669"/>
    <property type="project" value="UniProtKB-UniRule"/>
</dbReference>
<dbReference type="GO" id="GO:0003700">
    <property type="term" value="F:DNA-binding transcription factor activity"/>
    <property type="evidence" value="ECO:0007669"/>
    <property type="project" value="UniProtKB-UniRule"/>
</dbReference>
<dbReference type="GO" id="GO:0019904">
    <property type="term" value="F:protein domain specific binding"/>
    <property type="evidence" value="ECO:0007669"/>
    <property type="project" value="UniProtKB-UniRule"/>
</dbReference>
<dbReference type="GO" id="GO:0008270">
    <property type="term" value="F:zinc ion binding"/>
    <property type="evidence" value="ECO:0000314"/>
    <property type="project" value="BHF-UCL"/>
</dbReference>
<dbReference type="GO" id="GO:0006351">
    <property type="term" value="P:DNA-templated transcription"/>
    <property type="evidence" value="ECO:0007669"/>
    <property type="project" value="UniProtKB-UniRule"/>
</dbReference>
<dbReference type="GO" id="GO:0039645">
    <property type="term" value="P:symbiont-mediated perturbation of host cell cycle G1/S transition checkpoint"/>
    <property type="evidence" value="ECO:0007669"/>
    <property type="project" value="UniProtKB-UniRule"/>
</dbReference>
<dbReference type="GO" id="GO:0052170">
    <property type="term" value="P:symbiont-mediated suppression of host innate immune response"/>
    <property type="evidence" value="ECO:0007669"/>
    <property type="project" value="UniProtKB-KW"/>
</dbReference>
<dbReference type="GO" id="GO:0039502">
    <property type="term" value="P:symbiont-mediated suppression of host type I interferon-mediated signaling pathway"/>
    <property type="evidence" value="ECO:0007669"/>
    <property type="project" value="UniProtKB-UniRule"/>
</dbReference>
<dbReference type="Gene3D" id="3.30.160.330">
    <property type="match status" value="1"/>
</dbReference>
<dbReference type="HAMAP" id="MF_04004">
    <property type="entry name" value="PPV_E7"/>
    <property type="match status" value="1"/>
</dbReference>
<dbReference type="InterPro" id="IPR000148">
    <property type="entry name" value="Papilloma_E7"/>
</dbReference>
<dbReference type="Pfam" id="PF00527">
    <property type="entry name" value="E7"/>
    <property type="match status" value="1"/>
</dbReference>
<dbReference type="PIRSF" id="PIRSF003407">
    <property type="entry name" value="Papvi_E7"/>
    <property type="match status" value="1"/>
</dbReference>
<dbReference type="SUPFAM" id="SSF161234">
    <property type="entry name" value="E7 C-terminal domain-like"/>
    <property type="match status" value="1"/>
</dbReference>
<organismHost>
    <name type="scientific">Homo sapiens</name>
    <name type="common">Human</name>
    <dbReference type="NCBI Taxonomy" id="9606"/>
</organismHost>
<name>VE7_HPV18</name>
<keyword id="KW-0002">3D-structure</keyword>
<keyword id="KW-0010">Activator</keyword>
<keyword id="KW-0238">DNA-binding</keyword>
<keyword id="KW-0244">Early protein</keyword>
<keyword id="KW-1078">G1/S host cell cycle checkpoint dysregulation by virus</keyword>
<keyword id="KW-1035">Host cytoplasm</keyword>
<keyword id="KW-1048">Host nucleus</keyword>
<keyword id="KW-0945">Host-virus interaction</keyword>
<keyword id="KW-1090">Inhibition of host innate immune response by virus</keyword>
<keyword id="KW-1114">Inhibition of host interferon signaling pathway by virus</keyword>
<keyword id="KW-0922">Interferon antiviral system evasion</keyword>
<keyword id="KW-0479">Metal-binding</keyword>
<keyword id="KW-1121">Modulation of host cell cycle by virus</keyword>
<keyword id="KW-0553">Oncogene</keyword>
<keyword id="KW-1185">Reference proteome</keyword>
<keyword id="KW-0804">Transcription</keyword>
<keyword id="KW-0805">Transcription regulation</keyword>
<keyword id="KW-0899">Viral immunoevasion</keyword>
<keyword id="KW-0862">Zinc</keyword>
<keyword id="KW-0863">Zinc-finger</keyword>
<accession>P06788</accession>
<feature type="chain" id="PRO_0000133416" description="Protein E7">
    <location>
        <begin position="1"/>
        <end position="105"/>
    </location>
</feature>
<feature type="zinc finger region" evidence="1">
    <location>
        <begin position="65"/>
        <end position="101"/>
    </location>
</feature>
<feature type="region of interest" description="E7 terminal domain" evidence="2">
    <location>
        <begin position="1"/>
        <end position="49"/>
    </location>
</feature>
<feature type="short sequence motif" description="LXCXE motif; interaction with host RB1 and TMEM173/STING" evidence="2">
    <location>
        <begin position="25"/>
        <end position="29"/>
    </location>
</feature>
<feature type="short sequence motif" description="Nuclear export signal" evidence="2">
    <location>
        <begin position="83"/>
        <end position="91"/>
    </location>
</feature>
<feature type="mutagenesis site" description="Abolishes interaction with host TMEM173/STING." evidence="3">
    <original>LLCHE</original>
    <variation>VISFD</variation>
    <location>
        <begin position="25"/>
        <end position="29"/>
    </location>
</feature>
<feature type="sequence conflict" description="In Ref. 1 and 4." evidence="4" ref="1 4">
    <original>K</original>
    <variation>E</variation>
    <location>
        <position position="73"/>
    </location>
</feature>
<feature type="strand" evidence="5">
    <location>
        <begin position="57"/>
        <end position="64"/>
    </location>
</feature>
<feature type="turn" evidence="5">
    <location>
        <begin position="66"/>
        <end position="68"/>
    </location>
</feature>
<feature type="strand" evidence="5">
    <location>
        <begin position="71"/>
        <end position="78"/>
    </location>
</feature>
<feature type="helix" evidence="5">
    <location>
        <begin position="80"/>
        <end position="91"/>
    </location>
</feature>
<feature type="helix" evidence="5">
    <location>
        <begin position="99"/>
        <end position="102"/>
    </location>
</feature>
<gene>
    <name evidence="2" type="primary">E7</name>
</gene>
<sequence length="105" mass="11995">MHGPKATLQDIVLHLEPQNEIPVDLLCHEQLSDSEEENDEIDGVNHQHLPARRAEPQRHTMLCMCCKCEARIKLVVESSADDLRAFQQLFLNTLSFVCPWCASQQ</sequence>
<organism>
    <name type="scientific">Human papillomavirus type 18</name>
    <dbReference type="NCBI Taxonomy" id="333761"/>
    <lineage>
        <taxon>Viruses</taxon>
        <taxon>Monodnaviria</taxon>
        <taxon>Shotokuvirae</taxon>
        <taxon>Cossaviricota</taxon>
        <taxon>Papovaviricetes</taxon>
        <taxon>Zurhausenvirales</taxon>
        <taxon>Papillomaviridae</taxon>
        <taxon>Firstpapillomavirinae</taxon>
        <taxon>Alphapapillomavirus</taxon>
        <taxon>Alphapapillomavirus 7</taxon>
    </lineage>
</organism>
<protein>
    <recommendedName>
        <fullName evidence="2">Protein E7</fullName>
    </recommendedName>
</protein>
<evidence type="ECO:0000250" key="1">
    <source>
        <dbReference type="UniProtKB" id="P03129"/>
    </source>
</evidence>
<evidence type="ECO:0000255" key="2">
    <source>
        <dbReference type="HAMAP-Rule" id="MF_04004"/>
    </source>
</evidence>
<evidence type="ECO:0000269" key="3">
    <source>
    </source>
</evidence>
<evidence type="ECO:0000305" key="4"/>
<evidence type="ECO:0007829" key="5">
    <source>
        <dbReference type="PDB" id="6IWD"/>
    </source>
</evidence>
<reference key="1">
    <citation type="journal article" date="1987" name="J. Mol. Biol.">
        <title>Nucleotide sequence and comparative analysis of the human papillomavirus type 18 genome. Phylogeny of papillomaviruses and repeated structure of the E6 and E7 gene products.</title>
        <authorList>
            <person name="Cole S.T."/>
            <person name="Danos O."/>
        </authorList>
    </citation>
    <scope>NUCLEOTIDE SEQUENCE [GENOMIC DNA]</scope>
</reference>
<reference key="2">
    <citation type="journal article" date="1988" name="J. Virol.">
        <title>Nucleotide sequences of cDNAs for human papillomavirus type 18 transcripts in HeLa cells.</title>
        <authorList>
            <person name="Inagaki Y."/>
            <person name="Tsunokawa Y."/>
            <person name="Takebe N."/>
            <person name="Nawa H."/>
            <person name="Nakanishi S."/>
            <person name="Terada M."/>
            <person name="Sugimura T."/>
        </authorList>
    </citation>
    <scope>NUCLEOTIDE SEQUENCE [MRNA]</scope>
</reference>
<reference key="3">
    <citation type="journal article" date="1986" name="EMBO J.">
        <title>Different human cervical carcinoma cell lines show similar transcription patterns of human papillomavirus type 18 early genes.</title>
        <authorList>
            <person name="Schneider-Gaedicke A."/>
            <person name="Schwarz E."/>
        </authorList>
    </citation>
    <scope>NUCLEOTIDE SEQUENCE [GENOMIC DNA]</scope>
</reference>
<reference key="4">
    <citation type="journal article" date="1987" name="EMBO J.">
        <title>Identification of early proteins of the human papilloma viruses type 16 (HPV 16) and type 18 (HPV 18) in cervical carcinoma cells.</title>
        <authorList>
            <person name="Seedorf K."/>
            <person name="Oltersdorf T."/>
            <person name="Kraemer G."/>
            <person name="Roewekamp W."/>
        </authorList>
    </citation>
    <scope>NUCLEOTIDE SEQUENCE [GENOMIC DNA]</scope>
</reference>
<reference key="5">
    <citation type="journal article" date="2002" name="Rev. Med. Virol.">
        <title>Interactions of SV40 large T antigen and other viral proteins with retinoblastoma tumour suppressor.</title>
        <authorList>
            <person name="Lee C."/>
            <person name="Cho Y."/>
        </authorList>
    </citation>
    <scope>REVIEW</scope>
</reference>
<reference key="6">
    <citation type="journal article" date="2015" name="Science">
        <title>DNA tumor virus oncogenes antagonize the cGAS-STING DNA-sensing pathway.</title>
        <authorList>
            <person name="Lau L."/>
            <person name="Gray E.E."/>
            <person name="Brunette R.L."/>
            <person name="Stetson D.B."/>
        </authorList>
    </citation>
    <scope>INTERACTION WITH HUMAN TMEM173</scope>
    <scope>FUNCTION</scope>
    <scope>MUTAGENESIS OF 25-LEU--GLU-29</scope>
</reference>